<feature type="chain" id="PRO_0000355505" description="Large ribosomal subunit protein bL20c">
    <location>
        <begin position="1"/>
        <end position="126"/>
    </location>
</feature>
<accession>B2LML6</accession>
<organism>
    <name type="scientific">Guizotia abyssinica</name>
    <name type="common">Niger</name>
    <name type="synonym">Ramtilla</name>
    <dbReference type="NCBI Taxonomy" id="4230"/>
    <lineage>
        <taxon>Eukaryota</taxon>
        <taxon>Viridiplantae</taxon>
        <taxon>Streptophyta</taxon>
        <taxon>Embryophyta</taxon>
        <taxon>Tracheophyta</taxon>
        <taxon>Spermatophyta</taxon>
        <taxon>Magnoliopsida</taxon>
        <taxon>eudicotyledons</taxon>
        <taxon>Gunneridae</taxon>
        <taxon>Pentapetalae</taxon>
        <taxon>asterids</taxon>
        <taxon>campanulids</taxon>
        <taxon>Asterales</taxon>
        <taxon>Asteraceae</taxon>
        <taxon>Asteroideae</taxon>
        <taxon>Heliantheae alliance</taxon>
        <taxon>Millerieae</taxon>
        <taxon>Guizotia</taxon>
    </lineage>
</organism>
<name>RK20_GUIAB</name>
<comment type="function">
    <text evidence="1">Binds directly to 23S ribosomal RNA and is necessary for the in vitro assembly process of the 50S ribosomal subunit. It is not involved in the protein synthesizing functions of that subunit.</text>
</comment>
<comment type="subcellular location">
    <subcellularLocation>
        <location>Plastid</location>
        <location>Chloroplast</location>
    </subcellularLocation>
</comment>
<comment type="similarity">
    <text evidence="1">Belongs to the bacterial ribosomal protein bL20 family.</text>
</comment>
<protein>
    <recommendedName>
        <fullName evidence="1">Large ribosomal subunit protein bL20c</fullName>
    </recommendedName>
    <alternativeName>
        <fullName evidence="2">50S ribosomal protein L20, chloroplastic</fullName>
    </alternativeName>
</protein>
<sequence length="126" mass="15137">MTRIRRGYIARRRRTKIRLFASSFRGAHSRLTRTITQQKIRALVSAHRDRDRQKINFRRLWITRINAAIRERGVCYSYSRLINDLYKRQLLLNRKILAQIAISNRNCLYMISNEIIKEVSWKESTG</sequence>
<reference key="1">
    <citation type="submission" date="2008-03" db="EMBL/GenBank/DDBJ databases">
        <title>Guizotia abyssinica chloroplast sequenced using Solexa.</title>
        <authorList>
            <person name="Kane N.C."/>
            <person name="Dempewolf H."/>
            <person name="Stewart M.L."/>
            <person name="Cronk Q."/>
            <person name="Rieseberrg L.H."/>
        </authorList>
    </citation>
    <scope>NUCLEOTIDE SEQUENCE [LARGE SCALE GENOMIC DNA]</scope>
    <source>
        <strain>cv. PI 508077</strain>
    </source>
</reference>
<dbReference type="EMBL" id="EU549769">
    <property type="protein sequence ID" value="ACB86550.1"/>
    <property type="molecule type" value="Genomic_DNA"/>
</dbReference>
<dbReference type="RefSeq" id="YP_001837383.1">
    <property type="nucleotide sequence ID" value="NC_010601.1"/>
</dbReference>
<dbReference type="SMR" id="B2LML6"/>
<dbReference type="GeneID" id="6219174"/>
<dbReference type="GO" id="GO:0009507">
    <property type="term" value="C:chloroplast"/>
    <property type="evidence" value="ECO:0007669"/>
    <property type="project" value="UniProtKB-SubCell"/>
</dbReference>
<dbReference type="GO" id="GO:1990904">
    <property type="term" value="C:ribonucleoprotein complex"/>
    <property type="evidence" value="ECO:0007669"/>
    <property type="project" value="UniProtKB-KW"/>
</dbReference>
<dbReference type="GO" id="GO:0005840">
    <property type="term" value="C:ribosome"/>
    <property type="evidence" value="ECO:0007669"/>
    <property type="project" value="UniProtKB-KW"/>
</dbReference>
<dbReference type="GO" id="GO:0019843">
    <property type="term" value="F:rRNA binding"/>
    <property type="evidence" value="ECO:0007669"/>
    <property type="project" value="UniProtKB-UniRule"/>
</dbReference>
<dbReference type="GO" id="GO:0003735">
    <property type="term" value="F:structural constituent of ribosome"/>
    <property type="evidence" value="ECO:0007669"/>
    <property type="project" value="InterPro"/>
</dbReference>
<dbReference type="GO" id="GO:0000027">
    <property type="term" value="P:ribosomal large subunit assembly"/>
    <property type="evidence" value="ECO:0007669"/>
    <property type="project" value="UniProtKB-UniRule"/>
</dbReference>
<dbReference type="GO" id="GO:0006412">
    <property type="term" value="P:translation"/>
    <property type="evidence" value="ECO:0007669"/>
    <property type="project" value="InterPro"/>
</dbReference>
<dbReference type="CDD" id="cd07026">
    <property type="entry name" value="Ribosomal_L20"/>
    <property type="match status" value="1"/>
</dbReference>
<dbReference type="FunFam" id="1.10.1900.20:FF:000001">
    <property type="entry name" value="50S ribosomal protein L20"/>
    <property type="match status" value="1"/>
</dbReference>
<dbReference type="Gene3D" id="6.10.160.10">
    <property type="match status" value="1"/>
</dbReference>
<dbReference type="Gene3D" id="1.10.1900.20">
    <property type="entry name" value="Ribosomal protein L20"/>
    <property type="match status" value="1"/>
</dbReference>
<dbReference type="HAMAP" id="MF_00382">
    <property type="entry name" value="Ribosomal_bL20"/>
    <property type="match status" value="1"/>
</dbReference>
<dbReference type="InterPro" id="IPR005813">
    <property type="entry name" value="Ribosomal_bL20"/>
</dbReference>
<dbReference type="InterPro" id="IPR049946">
    <property type="entry name" value="RIBOSOMAL_L20_CS"/>
</dbReference>
<dbReference type="InterPro" id="IPR035566">
    <property type="entry name" value="Ribosomal_protein_bL20_C"/>
</dbReference>
<dbReference type="NCBIfam" id="TIGR01032">
    <property type="entry name" value="rplT_bact"/>
    <property type="match status" value="1"/>
</dbReference>
<dbReference type="PANTHER" id="PTHR10986">
    <property type="entry name" value="39S RIBOSOMAL PROTEIN L20"/>
    <property type="match status" value="1"/>
</dbReference>
<dbReference type="Pfam" id="PF00453">
    <property type="entry name" value="Ribosomal_L20"/>
    <property type="match status" value="1"/>
</dbReference>
<dbReference type="PRINTS" id="PR00062">
    <property type="entry name" value="RIBOSOMALL20"/>
</dbReference>
<dbReference type="SUPFAM" id="SSF74731">
    <property type="entry name" value="Ribosomal protein L20"/>
    <property type="match status" value="1"/>
</dbReference>
<dbReference type="PROSITE" id="PS00937">
    <property type="entry name" value="RIBOSOMAL_L20"/>
    <property type="match status" value="1"/>
</dbReference>
<keyword id="KW-0150">Chloroplast</keyword>
<keyword id="KW-0934">Plastid</keyword>
<keyword id="KW-0687">Ribonucleoprotein</keyword>
<keyword id="KW-0689">Ribosomal protein</keyword>
<keyword id="KW-0694">RNA-binding</keyword>
<keyword id="KW-0699">rRNA-binding</keyword>
<evidence type="ECO:0000255" key="1">
    <source>
        <dbReference type="HAMAP-Rule" id="MF_00382"/>
    </source>
</evidence>
<evidence type="ECO:0000305" key="2"/>
<geneLocation type="chloroplast"/>
<gene>
    <name evidence="1" type="primary">rpl20</name>
    <name type="ordered locus">GuabCp044</name>
</gene>
<proteinExistence type="inferred from homology"/>